<evidence type="ECO:0000255" key="1">
    <source>
        <dbReference type="HAMAP-Rule" id="MF_01159"/>
    </source>
</evidence>
<evidence type="ECO:0000256" key="2">
    <source>
        <dbReference type="SAM" id="MobiDB-lite"/>
    </source>
</evidence>
<keyword id="KW-0963">Cytoplasm</keyword>
<keyword id="KW-0235">DNA replication</keyword>
<keyword id="KW-0236">DNA replication inhibitor</keyword>
<keyword id="KW-0479">Metal-binding</keyword>
<keyword id="KW-0862">Zinc</keyword>
<comment type="function">
    <text evidence="1">Involved in control of chromosome replication initiation. Inhibits the cooperative binding of DnaA to the oriC region, thus negatively regulating initiation of chromosome replication. Inhibits the ability of DnaA-ATP to form a helix on DNA; does not disassemble preformed DnaA-DNA helices. Decreases the residence time of DnaA on the chromosome at its binding sites (oriC, replication forks and promoter-binding sites). Tethers DnaA to the replication machinery via the DNA polymerase beta sliding clamp subunit (dnaN). Associates with oriC and other DnaA targets on the chromosome in a DnaA-dependent manner.</text>
</comment>
<comment type="cofactor">
    <cofactor evidence="1">
        <name>Zn(2+)</name>
        <dbReference type="ChEBI" id="CHEBI:29105"/>
    </cofactor>
    <text evidence="1">Binds 1 zinc ion per subunit.</text>
</comment>
<comment type="subunit">
    <text evidence="1">Homotetramer. Interacts with both DnaA and DnaN, acting as a bridge between these two proteins.</text>
</comment>
<comment type="subcellular location">
    <subcellularLocation>
        <location evidence="1">Cytoplasm</location>
        <location evidence="1">Nucleoid</location>
    </subcellularLocation>
    <text evidence="1">Localizes in tight foci, which correspond to the replisome at mid-cell throughout the cell cycle.</text>
</comment>
<comment type="similarity">
    <text evidence="1">Belongs to the YabA family.</text>
</comment>
<proteinExistence type="inferred from homology"/>
<protein>
    <recommendedName>
        <fullName evidence="1">Replication initiation control protein YabA</fullName>
    </recommendedName>
</protein>
<feature type="chain" id="PRO_1000164306" description="Replication initiation control protein YabA">
    <location>
        <begin position="1"/>
        <end position="129"/>
    </location>
</feature>
<feature type="region of interest" description="Disordered" evidence="2">
    <location>
        <begin position="52"/>
        <end position="71"/>
    </location>
</feature>
<feature type="compositionally biased region" description="Basic and acidic residues" evidence="2">
    <location>
        <begin position="60"/>
        <end position="71"/>
    </location>
</feature>
<feature type="binding site" evidence="1">
    <location>
        <position position="103"/>
    </location>
    <ligand>
        <name>Zn(2+)</name>
        <dbReference type="ChEBI" id="CHEBI:29105"/>
    </ligand>
</feature>
<feature type="binding site" evidence="1">
    <location>
        <position position="105"/>
    </location>
    <ligand>
        <name>Zn(2+)</name>
        <dbReference type="ChEBI" id="CHEBI:29105"/>
    </ligand>
</feature>
<feature type="binding site" evidence="1">
    <location>
        <position position="119"/>
    </location>
    <ligand>
        <name>Zn(2+)</name>
        <dbReference type="ChEBI" id="CHEBI:29105"/>
    </ligand>
</feature>
<feature type="binding site" evidence="1">
    <location>
        <position position="122"/>
    </location>
    <ligand>
        <name>Zn(2+)</name>
        <dbReference type="ChEBI" id="CHEBI:29105"/>
    </ligand>
</feature>
<reference key="1">
    <citation type="journal article" date="2011" name="J. Bacteriol.">
        <title>Genome sequence of lineage III Listeria monocytogenes strain HCC23.</title>
        <authorList>
            <person name="Steele C.L."/>
            <person name="Donaldson J.R."/>
            <person name="Paul D."/>
            <person name="Banes M.M."/>
            <person name="Arick T."/>
            <person name="Bridges S.M."/>
            <person name="Lawrence M.L."/>
        </authorList>
    </citation>
    <scope>NUCLEOTIDE SEQUENCE [LARGE SCALE GENOMIC DNA]</scope>
    <source>
        <strain>HCC23</strain>
    </source>
</reference>
<dbReference type="EMBL" id="CP001175">
    <property type="protein sequence ID" value="ACK40810.1"/>
    <property type="molecule type" value="Genomic_DNA"/>
</dbReference>
<dbReference type="RefSeq" id="WP_003723491.1">
    <property type="nucleotide sequence ID" value="NC_011660.1"/>
</dbReference>
<dbReference type="SMR" id="B8DGQ7"/>
<dbReference type="GeneID" id="86846975"/>
<dbReference type="KEGG" id="lmh:LMHCC_2475"/>
<dbReference type="HOGENOM" id="CLU_157169_0_0_9"/>
<dbReference type="GO" id="GO:0009295">
    <property type="term" value="C:nucleoid"/>
    <property type="evidence" value="ECO:0007669"/>
    <property type="project" value="UniProtKB-SubCell"/>
</dbReference>
<dbReference type="GO" id="GO:0006260">
    <property type="term" value="P:DNA replication"/>
    <property type="evidence" value="ECO:0007669"/>
    <property type="project" value="UniProtKB-UniRule"/>
</dbReference>
<dbReference type="HAMAP" id="MF_01159">
    <property type="entry name" value="YabA"/>
    <property type="match status" value="1"/>
</dbReference>
<dbReference type="InterPro" id="IPR010377">
    <property type="entry name" value="YabA"/>
</dbReference>
<dbReference type="NCBIfam" id="NF009643">
    <property type="entry name" value="PRK13169.1-4"/>
    <property type="match status" value="1"/>
</dbReference>
<dbReference type="NCBIfam" id="NF009644">
    <property type="entry name" value="PRK13169.1-5"/>
    <property type="match status" value="1"/>
</dbReference>
<dbReference type="Pfam" id="PF06156">
    <property type="entry name" value="YabA"/>
    <property type="match status" value="1"/>
</dbReference>
<dbReference type="PIRSF" id="PIRSF021439">
    <property type="entry name" value="DUF972"/>
    <property type="match status" value="1"/>
</dbReference>
<organism>
    <name type="scientific">Listeria monocytogenes serotype 4a (strain HCC23)</name>
    <dbReference type="NCBI Taxonomy" id="552536"/>
    <lineage>
        <taxon>Bacteria</taxon>
        <taxon>Bacillati</taxon>
        <taxon>Bacillota</taxon>
        <taxon>Bacilli</taxon>
        <taxon>Bacillales</taxon>
        <taxon>Listeriaceae</taxon>
        <taxon>Listeria</taxon>
    </lineage>
</organism>
<gene>
    <name evidence="1" type="primary">yabA</name>
    <name type="ordered locus">LMHCC_2475</name>
</gene>
<sequence>MDKKAIFDSVSNMEEQIGELYQQLGDLKTNLGEMLEENNRLNLENEHLRRRLSLTDEATPEPKAETEAEHGVMAPNRKEAMQQMIELGEGYDNLVQLYKEGFHVCNVHFGSPRGNDEDCLFCLSLLNKK</sequence>
<name>YABA_LISMH</name>
<accession>B8DGQ7</accession>